<feature type="chain" id="PRO_1000040606" description="3,4-dihydroxy-2-butanone 4-phosphate synthase">
    <location>
        <begin position="1"/>
        <end position="217"/>
    </location>
</feature>
<feature type="binding site" evidence="1">
    <location>
        <begin position="37"/>
        <end position="38"/>
    </location>
    <ligand>
        <name>D-ribulose 5-phosphate</name>
        <dbReference type="ChEBI" id="CHEBI:58121"/>
    </ligand>
</feature>
<feature type="binding site" evidence="1">
    <location>
        <position position="38"/>
    </location>
    <ligand>
        <name>Mg(2+)</name>
        <dbReference type="ChEBI" id="CHEBI:18420"/>
        <label>1</label>
    </ligand>
</feature>
<feature type="binding site" evidence="1">
    <location>
        <position position="38"/>
    </location>
    <ligand>
        <name>Mg(2+)</name>
        <dbReference type="ChEBI" id="CHEBI:18420"/>
        <label>2</label>
    </ligand>
</feature>
<feature type="binding site" evidence="1">
    <location>
        <position position="42"/>
    </location>
    <ligand>
        <name>D-ribulose 5-phosphate</name>
        <dbReference type="ChEBI" id="CHEBI:58121"/>
    </ligand>
</feature>
<feature type="binding site" evidence="1">
    <location>
        <begin position="150"/>
        <end position="154"/>
    </location>
    <ligand>
        <name>D-ribulose 5-phosphate</name>
        <dbReference type="ChEBI" id="CHEBI:58121"/>
    </ligand>
</feature>
<feature type="binding site" evidence="1">
    <location>
        <position position="153"/>
    </location>
    <ligand>
        <name>Mg(2+)</name>
        <dbReference type="ChEBI" id="CHEBI:18420"/>
        <label>2</label>
    </ligand>
</feature>
<feature type="binding site" evidence="1">
    <location>
        <position position="174"/>
    </location>
    <ligand>
        <name>D-ribulose 5-phosphate</name>
        <dbReference type="ChEBI" id="CHEBI:58121"/>
    </ligand>
</feature>
<feature type="site" description="Essential for catalytic activity" evidence="1">
    <location>
        <position position="136"/>
    </location>
</feature>
<feature type="site" description="Essential for catalytic activity" evidence="1">
    <location>
        <position position="174"/>
    </location>
</feature>
<accession>Q0TD60</accession>
<organism>
    <name type="scientific">Escherichia coli O6:K15:H31 (strain 536 / UPEC)</name>
    <dbReference type="NCBI Taxonomy" id="362663"/>
    <lineage>
        <taxon>Bacteria</taxon>
        <taxon>Pseudomonadati</taxon>
        <taxon>Pseudomonadota</taxon>
        <taxon>Gammaproteobacteria</taxon>
        <taxon>Enterobacterales</taxon>
        <taxon>Enterobacteriaceae</taxon>
        <taxon>Escherichia</taxon>
    </lineage>
</organism>
<comment type="function">
    <text evidence="1">Catalyzes the conversion of D-ribulose 5-phosphate to formate and 3,4-dihydroxy-2-butanone 4-phosphate.</text>
</comment>
<comment type="catalytic activity">
    <reaction evidence="1">
        <text>D-ribulose 5-phosphate = (2S)-2-hydroxy-3-oxobutyl phosphate + formate + H(+)</text>
        <dbReference type="Rhea" id="RHEA:18457"/>
        <dbReference type="ChEBI" id="CHEBI:15378"/>
        <dbReference type="ChEBI" id="CHEBI:15740"/>
        <dbReference type="ChEBI" id="CHEBI:58121"/>
        <dbReference type="ChEBI" id="CHEBI:58830"/>
        <dbReference type="EC" id="4.1.99.12"/>
    </reaction>
</comment>
<comment type="cofactor">
    <cofactor evidence="1">
        <name>Mg(2+)</name>
        <dbReference type="ChEBI" id="CHEBI:18420"/>
    </cofactor>
    <cofactor evidence="1">
        <name>Mn(2+)</name>
        <dbReference type="ChEBI" id="CHEBI:29035"/>
    </cofactor>
    <text evidence="1">Binds 2 divalent metal cations per subunit. Magnesium or manganese.</text>
</comment>
<comment type="pathway">
    <text evidence="1">Cofactor biosynthesis; riboflavin biosynthesis; 2-hydroxy-3-oxobutyl phosphate from D-ribulose 5-phosphate: step 1/1.</text>
</comment>
<comment type="subunit">
    <text evidence="1">Homodimer.</text>
</comment>
<comment type="similarity">
    <text evidence="1">Belongs to the DHBP synthase family.</text>
</comment>
<protein>
    <recommendedName>
        <fullName evidence="1">3,4-dihydroxy-2-butanone 4-phosphate synthase</fullName>
        <shortName evidence="1">DHBP synthase</shortName>
        <ecNumber evidence="1">4.1.99.12</ecNumber>
    </recommendedName>
</protein>
<dbReference type="EC" id="4.1.99.12" evidence="1"/>
<dbReference type="EMBL" id="CP000247">
    <property type="protein sequence ID" value="ABG71119.1"/>
    <property type="molecule type" value="Genomic_DNA"/>
</dbReference>
<dbReference type="RefSeq" id="WP_001076997.1">
    <property type="nucleotide sequence ID" value="NC_008253.1"/>
</dbReference>
<dbReference type="SMR" id="Q0TD60"/>
<dbReference type="GeneID" id="93778953"/>
<dbReference type="KEGG" id="ecp:ECP_3136"/>
<dbReference type="HOGENOM" id="CLU_020273_3_0_6"/>
<dbReference type="UniPathway" id="UPA00275">
    <property type="reaction ID" value="UER00399"/>
</dbReference>
<dbReference type="Proteomes" id="UP000009182">
    <property type="component" value="Chromosome"/>
</dbReference>
<dbReference type="GO" id="GO:0005829">
    <property type="term" value="C:cytosol"/>
    <property type="evidence" value="ECO:0007669"/>
    <property type="project" value="TreeGrafter"/>
</dbReference>
<dbReference type="GO" id="GO:0008686">
    <property type="term" value="F:3,4-dihydroxy-2-butanone-4-phosphate synthase activity"/>
    <property type="evidence" value="ECO:0007669"/>
    <property type="project" value="UniProtKB-UniRule"/>
</dbReference>
<dbReference type="GO" id="GO:0000287">
    <property type="term" value="F:magnesium ion binding"/>
    <property type="evidence" value="ECO:0007669"/>
    <property type="project" value="UniProtKB-UniRule"/>
</dbReference>
<dbReference type="GO" id="GO:0030145">
    <property type="term" value="F:manganese ion binding"/>
    <property type="evidence" value="ECO:0007669"/>
    <property type="project" value="UniProtKB-UniRule"/>
</dbReference>
<dbReference type="GO" id="GO:0009231">
    <property type="term" value="P:riboflavin biosynthetic process"/>
    <property type="evidence" value="ECO:0007669"/>
    <property type="project" value="UniProtKB-UniRule"/>
</dbReference>
<dbReference type="FunFam" id="3.90.870.10:FF:000002">
    <property type="entry name" value="3,4-dihydroxy-2-butanone 4-phosphate synthase"/>
    <property type="match status" value="1"/>
</dbReference>
<dbReference type="Gene3D" id="3.90.870.10">
    <property type="entry name" value="DHBP synthase"/>
    <property type="match status" value="1"/>
</dbReference>
<dbReference type="HAMAP" id="MF_00180">
    <property type="entry name" value="RibB"/>
    <property type="match status" value="1"/>
</dbReference>
<dbReference type="InterPro" id="IPR017945">
    <property type="entry name" value="DHBP_synth_RibB-like_a/b_dom"/>
</dbReference>
<dbReference type="InterPro" id="IPR000422">
    <property type="entry name" value="DHBP_synthase_RibB"/>
</dbReference>
<dbReference type="NCBIfam" id="TIGR00506">
    <property type="entry name" value="ribB"/>
    <property type="match status" value="1"/>
</dbReference>
<dbReference type="PANTHER" id="PTHR21327:SF38">
    <property type="entry name" value="3,4-DIHYDROXY-2-BUTANONE 4-PHOSPHATE SYNTHASE"/>
    <property type="match status" value="1"/>
</dbReference>
<dbReference type="PANTHER" id="PTHR21327">
    <property type="entry name" value="GTP CYCLOHYDROLASE II-RELATED"/>
    <property type="match status" value="1"/>
</dbReference>
<dbReference type="Pfam" id="PF00926">
    <property type="entry name" value="DHBP_synthase"/>
    <property type="match status" value="1"/>
</dbReference>
<dbReference type="SUPFAM" id="SSF55821">
    <property type="entry name" value="YrdC/RibB"/>
    <property type="match status" value="1"/>
</dbReference>
<evidence type="ECO:0000255" key="1">
    <source>
        <dbReference type="HAMAP-Rule" id="MF_00180"/>
    </source>
</evidence>
<reference key="1">
    <citation type="journal article" date="2006" name="Mol. Microbiol.">
        <title>Role of pathogenicity island-associated integrases in the genome plasticity of uropathogenic Escherichia coli strain 536.</title>
        <authorList>
            <person name="Hochhut B."/>
            <person name="Wilde C."/>
            <person name="Balling G."/>
            <person name="Middendorf B."/>
            <person name="Dobrindt U."/>
            <person name="Brzuszkiewicz E."/>
            <person name="Gottschalk G."/>
            <person name="Carniel E."/>
            <person name="Hacker J."/>
        </authorList>
    </citation>
    <scope>NUCLEOTIDE SEQUENCE [LARGE SCALE GENOMIC DNA]</scope>
    <source>
        <strain>536 / UPEC</strain>
    </source>
</reference>
<proteinExistence type="inferred from homology"/>
<keyword id="KW-0456">Lyase</keyword>
<keyword id="KW-0460">Magnesium</keyword>
<keyword id="KW-0464">Manganese</keyword>
<keyword id="KW-0479">Metal-binding</keyword>
<keyword id="KW-0686">Riboflavin biosynthesis</keyword>
<sequence>MNQTLLSSFGTPFERVENALAALREGRGVMVLDDEDRENEGDMIFPAETMTVEQMALTIRHGSGIVCLCITEDRRKQLDLPMMVENNTSAYGTGFTVTIEAAEGVTTGVSAADRITTVRAAIADGAKPSDLNRPGHVFPLRAQAGGVLTRGGHTEATIDLMTLAGFKPAGVLCELTNDDGTMARAPECIEFANKHNMALVTIEDLVAYRQAHERKAS</sequence>
<name>RIBB_ECOL5</name>
<gene>
    <name evidence="1" type="primary">ribB</name>
    <name type="ordered locus">ECP_3136</name>
</gene>